<protein>
    <recommendedName>
        <fullName evidence="1">Protein SlyX homolog</fullName>
    </recommendedName>
</protein>
<organism>
    <name type="scientific">Histophilus somni (strain 2336)</name>
    <name type="common">Haemophilus somnus</name>
    <dbReference type="NCBI Taxonomy" id="228400"/>
    <lineage>
        <taxon>Bacteria</taxon>
        <taxon>Pseudomonadati</taxon>
        <taxon>Pseudomonadota</taxon>
        <taxon>Gammaproteobacteria</taxon>
        <taxon>Pasteurellales</taxon>
        <taxon>Pasteurellaceae</taxon>
        <taxon>Histophilus</taxon>
    </lineage>
</organism>
<name>SLYX_HISS2</name>
<evidence type="ECO:0000255" key="1">
    <source>
        <dbReference type="HAMAP-Rule" id="MF_00715"/>
    </source>
</evidence>
<feature type="chain" id="PRO_1000083239" description="Protein SlyX homolog">
    <location>
        <begin position="1"/>
        <end position="73"/>
    </location>
</feature>
<dbReference type="EMBL" id="CP000947">
    <property type="protein sequence ID" value="ACA31586.1"/>
    <property type="molecule type" value="Genomic_DNA"/>
</dbReference>
<dbReference type="RefSeq" id="WP_012340901.1">
    <property type="nucleotide sequence ID" value="NC_010519.1"/>
</dbReference>
<dbReference type="SMR" id="B0UWB7"/>
<dbReference type="STRING" id="228400.HSM_1800"/>
<dbReference type="GeneID" id="31488108"/>
<dbReference type="KEGG" id="hsm:HSM_1800"/>
<dbReference type="HOGENOM" id="CLU_180796_4_0_6"/>
<dbReference type="Gene3D" id="1.20.5.300">
    <property type="match status" value="1"/>
</dbReference>
<dbReference type="HAMAP" id="MF_00715">
    <property type="entry name" value="SlyX"/>
    <property type="match status" value="1"/>
</dbReference>
<dbReference type="InterPro" id="IPR007236">
    <property type="entry name" value="SlyX"/>
</dbReference>
<dbReference type="NCBIfam" id="NF002556">
    <property type="entry name" value="PRK02119.1"/>
    <property type="match status" value="1"/>
</dbReference>
<dbReference type="PANTHER" id="PTHR36508">
    <property type="entry name" value="PROTEIN SLYX"/>
    <property type="match status" value="1"/>
</dbReference>
<dbReference type="PANTHER" id="PTHR36508:SF1">
    <property type="entry name" value="PROTEIN SLYX"/>
    <property type="match status" value="1"/>
</dbReference>
<dbReference type="Pfam" id="PF04102">
    <property type="entry name" value="SlyX"/>
    <property type="match status" value="1"/>
</dbReference>
<gene>
    <name evidence="1" type="primary">slyX</name>
    <name type="ordered locus">HSM_1800</name>
</gene>
<reference key="1">
    <citation type="submission" date="2008-02" db="EMBL/GenBank/DDBJ databases">
        <title>Complete sequence of Haemophilus somnus 2336.</title>
        <authorList>
            <consortium name="US DOE Joint Genome Institute"/>
            <person name="Siddaramappa S."/>
            <person name="Duncan A.J."/>
            <person name="Challacombe J.F."/>
            <person name="Rainey D."/>
            <person name="Gillaspy A.F."/>
            <person name="Carson M."/>
            <person name="Gipson J."/>
            <person name="Gipson M."/>
            <person name="Bruce D."/>
            <person name="Detter J.C."/>
            <person name="Han C.S."/>
            <person name="Land M."/>
            <person name="Tapia R."/>
            <person name="Thompson L.S."/>
            <person name="Orvis J."/>
            <person name="Zaitshik J."/>
            <person name="Barnes G."/>
            <person name="Brettin T.S."/>
            <person name="Dyer D.W."/>
            <person name="Inzana T.J."/>
        </authorList>
    </citation>
    <scope>NUCLEOTIDE SEQUENCE [LARGE SCALE GENOMIC DNA]</scope>
    <source>
        <strain>2336</strain>
    </source>
</reference>
<comment type="similarity">
    <text evidence="1">Belongs to the SlyX family.</text>
</comment>
<accession>B0UWB7</accession>
<sequence length="73" mass="8521">MPQTQELDQRIAELEMKIAFQENTLEELNQALIDQQFVLDKMQLQLRYMASKLKDLQSSNIASQAEETPPPHY</sequence>
<proteinExistence type="inferred from homology"/>